<evidence type="ECO:0000250" key="1">
    <source>
        <dbReference type="UniProtKB" id="P32499"/>
    </source>
</evidence>
<evidence type="ECO:0000250" key="2">
    <source>
        <dbReference type="UniProtKB" id="Q9USL4"/>
    </source>
</evidence>
<evidence type="ECO:0000255" key="3"/>
<evidence type="ECO:0000255" key="4">
    <source>
        <dbReference type="PROSITE-ProRule" id="PRU00164"/>
    </source>
</evidence>
<evidence type="ECO:0000255" key="5">
    <source>
        <dbReference type="PROSITE-ProRule" id="PRU00768"/>
    </source>
</evidence>
<evidence type="ECO:0000256" key="6">
    <source>
        <dbReference type="SAM" id="MobiDB-lite"/>
    </source>
</evidence>
<evidence type="ECO:0000303" key="7">
    <source>
    </source>
</evidence>
<evidence type="ECO:0000305" key="8">
    <source>
    </source>
</evidence>
<comment type="function">
    <text evidence="1">Functions as a component of the nuclear pore complex (NPC). NPC components, collectively referred to as nucleoporins (NUPs), can play the role of both NPC structural components and of docking or interaction partners for transiently associated nuclear transport factors. Active directional transport is assured by both, a Phe-Gly (FG) repeat affinity gradient for these transport factors across the NPC and a transport cofactor concentration gradient across the nuclear envelope (GSP1 and GSP2 GTPases associated predominantly with GTP in the nucleus, with GDP in the cytoplasm).</text>
</comment>
<comment type="subunit">
    <text evidence="2 8">The nuclear pore complex (NPC) constitutes the exclusive means of nucleocytoplasmic transport. NPCs allow the passive diffusion of ions and small molecules and the active, nuclear transport receptor-mediated bidirectional transport of macromolecules such as proteins, RNAs, ribonucleoparticles (RNPs), and ribosomal subunits across the nuclear envelope. The 55-60 MDa NPC is composed of at least 28 different subunits: AMO1, ELYS, GLE1, GLE2, MLP1, NDC1, NIC96, NSP1, NUP133, NUP145, NUP152, NUP159, NUP170, NUP188, NUP192, NUP37, NUP49, NUP53, NUP56, NUP57, NUP82, NUP84, NUP85, POM152, POM33, POM34, SEC13 and SEH1. Due to its 8-fold rotational symmetry, all subunits are present with 8 copies or multiples thereof.</text>
</comment>
<comment type="subcellular location">
    <subcellularLocation>
        <location evidence="1">Nucleus</location>
        <location evidence="1">Nuclear pore complex</location>
    </subcellularLocation>
    <subcellularLocation>
        <location evidence="1">Nucleus membrane</location>
        <topology evidence="1">Peripheral membrane protein</topology>
        <orientation evidence="1">Nucleoplasmic side</orientation>
    </subcellularLocation>
</comment>
<comment type="domain">
    <text evidence="1">Contains FG repeats. FG repeats are interaction sites for karyopherins (importins, exportins) and form probably an affinity gradient, guiding the transport proteins unidirectionally with their cargo through the NPC. FG repeat regions are highly flexible and lack ordered secondary structure. The overall conservation of FG repeats regarding exact sequence, spacing, and repeat unit length is limited. FG repeat types and their physico-chemical environment change across the NPC from the nucleoplasmic to the cytoplasmic side.</text>
</comment>
<gene>
    <name type="primary">NUP56</name>
    <name type="ORF">CTHT_0029970</name>
</gene>
<keyword id="KW-0175">Coiled coil</keyword>
<keyword id="KW-0472">Membrane</keyword>
<keyword id="KW-0509">mRNA transport</keyword>
<keyword id="KW-0906">Nuclear pore complex</keyword>
<keyword id="KW-0539">Nucleus</keyword>
<keyword id="KW-0653">Protein transport</keyword>
<keyword id="KW-1185">Reference proteome</keyword>
<keyword id="KW-0677">Repeat</keyword>
<keyword id="KW-0811">Translocation</keyword>
<keyword id="KW-0813">Transport</keyword>
<protein>
    <recommendedName>
        <fullName evidence="7">Nucleoporin NUP56</fullName>
    </recommendedName>
    <alternativeName>
        <fullName>Nuclear pore protein NUP56</fullName>
    </alternativeName>
</protein>
<accession>G0S8I1</accession>
<accession>G0ZGV9</accession>
<feature type="chain" id="PRO_0000433183" description="Nucleoporin NUP56">
    <location>
        <begin position="1"/>
        <end position="524"/>
    </location>
</feature>
<feature type="repeat" description="FG 1">
    <location>
        <begin position="223"/>
        <end position="224"/>
    </location>
</feature>
<feature type="repeat" description="FG 2">
    <location>
        <begin position="226"/>
        <end position="227"/>
    </location>
</feature>
<feature type="repeat" description="FG 3">
    <location>
        <begin position="237"/>
        <end position="238"/>
    </location>
</feature>
<feature type="repeat" description="FG 4">
    <location>
        <begin position="247"/>
        <end position="248"/>
    </location>
</feature>
<feature type="repeat" description="FG 5">
    <location>
        <begin position="266"/>
        <end position="267"/>
    </location>
</feature>
<feature type="repeat" description="FG 6">
    <location>
        <begin position="312"/>
        <end position="313"/>
    </location>
</feature>
<feature type="repeat" description="FG 7">
    <location>
        <begin position="328"/>
        <end position="329"/>
    </location>
</feature>
<feature type="domain" description="RanBD1" evidence="4">
    <location>
        <begin position="377"/>
        <end position="475"/>
    </location>
</feature>
<feature type="region of interest" description="Disordered" evidence="6">
    <location>
        <begin position="1"/>
        <end position="219"/>
    </location>
</feature>
<feature type="region of interest" description="Disordered" evidence="6">
    <location>
        <begin position="247"/>
        <end position="284"/>
    </location>
</feature>
<feature type="region of interest" description="Disordered" evidence="6">
    <location>
        <begin position="300"/>
        <end position="371"/>
    </location>
</feature>
<feature type="coiled-coil region" evidence="3">
    <location>
        <begin position="111"/>
        <end position="133"/>
    </location>
</feature>
<feature type="coiled-coil region" evidence="3">
    <location>
        <begin position="345"/>
        <end position="376"/>
    </location>
</feature>
<feature type="coiled-coil region" evidence="3">
    <location>
        <begin position="503"/>
        <end position="524"/>
    </location>
</feature>
<feature type="short sequence motif" description="Nuclear localization signal" evidence="5">
    <location>
        <begin position="37"/>
        <end position="44"/>
    </location>
</feature>
<feature type="compositionally biased region" description="Basic and acidic residues" evidence="6">
    <location>
        <begin position="28"/>
        <end position="80"/>
    </location>
</feature>
<feature type="compositionally biased region" description="Basic and acidic residues" evidence="6">
    <location>
        <begin position="114"/>
        <end position="168"/>
    </location>
</feature>
<feature type="compositionally biased region" description="Basic and acidic residues" evidence="6">
    <location>
        <begin position="179"/>
        <end position="199"/>
    </location>
</feature>
<feature type="compositionally biased region" description="Polar residues" evidence="6">
    <location>
        <begin position="200"/>
        <end position="219"/>
    </location>
</feature>
<feature type="compositionally biased region" description="Low complexity" evidence="6">
    <location>
        <begin position="248"/>
        <end position="277"/>
    </location>
</feature>
<feature type="compositionally biased region" description="Acidic residues" evidence="6">
    <location>
        <begin position="332"/>
        <end position="345"/>
    </location>
</feature>
<feature type="compositionally biased region" description="Acidic residues" evidence="6">
    <location>
        <begin position="352"/>
        <end position="362"/>
    </location>
</feature>
<organism>
    <name type="scientific">Chaetomium thermophilum (strain DSM 1495 / CBS 144.50 / IMI 039719)</name>
    <name type="common">Thermochaetoides thermophila</name>
    <dbReference type="NCBI Taxonomy" id="759272"/>
    <lineage>
        <taxon>Eukaryota</taxon>
        <taxon>Fungi</taxon>
        <taxon>Dikarya</taxon>
        <taxon>Ascomycota</taxon>
        <taxon>Pezizomycotina</taxon>
        <taxon>Sordariomycetes</taxon>
        <taxon>Sordariomycetidae</taxon>
        <taxon>Sordariales</taxon>
        <taxon>Chaetomiaceae</taxon>
        <taxon>Thermochaetoides</taxon>
    </lineage>
</organism>
<reference key="1">
    <citation type="journal article" date="2011" name="Cell">
        <title>Insight into structure and assembly of the nuclear pore complex by utilizing the genome of a eukaryotic thermophile.</title>
        <authorList>
            <person name="Amlacher S."/>
            <person name="Sarges P."/>
            <person name="Flemming D."/>
            <person name="van Noort V."/>
            <person name="Kunze R."/>
            <person name="Devos D.P."/>
            <person name="Arumugam M."/>
            <person name="Bork P."/>
            <person name="Hurt E."/>
        </authorList>
    </citation>
    <scope>NUCLEOTIDE SEQUENCE [LARGE SCALE GENOMIC DNA]</scope>
    <source>
        <strain>DSM 1495 / CBS 144.50 / IMI 039719</strain>
    </source>
</reference>
<name>NUP56_CHATD</name>
<proteinExistence type="inferred from homology"/>
<dbReference type="EMBL" id="GL988041">
    <property type="protein sequence ID" value="EGS21155.1"/>
    <property type="molecule type" value="Genomic_DNA"/>
</dbReference>
<dbReference type="EMBL" id="JF276305">
    <property type="protein sequence ID" value="AEL00697.1"/>
    <property type="molecule type" value="Genomic_DNA"/>
</dbReference>
<dbReference type="RefSeq" id="XP_006693451.1">
    <property type="nucleotide sequence ID" value="XM_006693388.1"/>
</dbReference>
<dbReference type="SMR" id="G0S8I1"/>
<dbReference type="STRING" id="759272.G0S8I1"/>
<dbReference type="TCDB" id="1.I.1.1.2">
    <property type="family name" value="the nuclear pore complex (npc) family"/>
</dbReference>
<dbReference type="GeneID" id="18257035"/>
<dbReference type="KEGG" id="cthr:CTHT_0029970"/>
<dbReference type="eggNOG" id="KOG0866">
    <property type="taxonomic scope" value="Eukaryota"/>
</dbReference>
<dbReference type="HOGENOM" id="CLU_044364_0_0_1"/>
<dbReference type="OMA" id="LFKGMRC"/>
<dbReference type="OrthoDB" id="185618at2759"/>
<dbReference type="Proteomes" id="UP000008066">
    <property type="component" value="Unassembled WGS sequence"/>
</dbReference>
<dbReference type="GO" id="GO:0031965">
    <property type="term" value="C:nuclear membrane"/>
    <property type="evidence" value="ECO:0007669"/>
    <property type="project" value="UniProtKB-SubCell"/>
</dbReference>
<dbReference type="GO" id="GO:0005643">
    <property type="term" value="C:nuclear pore"/>
    <property type="evidence" value="ECO:0007669"/>
    <property type="project" value="UniProtKB-SubCell"/>
</dbReference>
<dbReference type="GO" id="GO:0046907">
    <property type="term" value="P:intracellular transport"/>
    <property type="evidence" value="ECO:0007669"/>
    <property type="project" value="InterPro"/>
</dbReference>
<dbReference type="GO" id="GO:0051028">
    <property type="term" value="P:mRNA transport"/>
    <property type="evidence" value="ECO:0007669"/>
    <property type="project" value="UniProtKB-KW"/>
</dbReference>
<dbReference type="GO" id="GO:0015031">
    <property type="term" value="P:protein transport"/>
    <property type="evidence" value="ECO:0007669"/>
    <property type="project" value="UniProtKB-KW"/>
</dbReference>
<dbReference type="Gene3D" id="2.30.29.30">
    <property type="entry name" value="Pleckstrin-homology domain (PH domain)/Phosphotyrosine-binding domain (PTB)"/>
    <property type="match status" value="1"/>
</dbReference>
<dbReference type="InterPro" id="IPR011993">
    <property type="entry name" value="PH-like_dom_sf"/>
</dbReference>
<dbReference type="InterPro" id="IPR000156">
    <property type="entry name" value="Ran_bind_dom"/>
</dbReference>
<dbReference type="InterPro" id="IPR045255">
    <property type="entry name" value="RanBP1-like"/>
</dbReference>
<dbReference type="PANTHER" id="PTHR23138">
    <property type="entry name" value="RAN BINDING PROTEIN"/>
    <property type="match status" value="1"/>
</dbReference>
<dbReference type="PANTHER" id="PTHR23138:SF142">
    <property type="entry name" value="RAN-BINDING PROTEIN 3B-RELATED"/>
    <property type="match status" value="1"/>
</dbReference>
<dbReference type="Pfam" id="PF00638">
    <property type="entry name" value="Ran_BP1"/>
    <property type="match status" value="1"/>
</dbReference>
<dbReference type="SMART" id="SM00160">
    <property type="entry name" value="RanBD"/>
    <property type="match status" value="1"/>
</dbReference>
<dbReference type="SUPFAM" id="SSF50729">
    <property type="entry name" value="PH domain-like"/>
    <property type="match status" value="1"/>
</dbReference>
<dbReference type="PROSITE" id="PS50196">
    <property type="entry name" value="RANBD1"/>
    <property type="match status" value="1"/>
</dbReference>
<sequence>MADDPHNTSTSDVSELVPDNTEPSAANVKEDAETTAARRELKQTTISDKAKRDSAQLSQEDDKSASEEDDNKSDAGEPEKKKPRTSRGLTPEVQLAAPKQEVPKETVASPKKRTHDELEQDGKEEEEKKEGEKPSSQNRAERDEPEKKRPRDRQASLSVERDGQKEVEPLSAQESRPSSAEKPKIEEKKDESKDTKVDKPQTSSSAFANSSMAKFASSTTSPFGAFGAAAAGKTNLFGLPATSSNIFGSKSADASAAPAGPPKLSFGSASAASPFASLNGQAGGMSSLFKSPFASAFSGGSSALKTAGATGFGKPGEPLKTGKSAKPFGAPESDEEDEGEGEEGEENKSENGEGEEKEEEEKEEKASGEEKKKFKLQKVHIDDGEGNETTLLSVRAKMYVMEKGVGWKERGAGMLKVNVPKQAVEVEEGNQPDADSFDPAALDDAARKLVRLIMRQDSTLRVILNTPILPAMKFQVNHKLKAATVLFTAFEGGEARQVQMKMSQANATQFSNMVEKIKEKLAAA</sequence>